<keyword id="KW-0143">Chaperone</keyword>
<keyword id="KW-0963">Cytoplasm</keyword>
<keyword id="KW-1185">Reference proteome</keyword>
<keyword id="KW-0346">Stress response</keyword>
<name>GRPE_GLOC7</name>
<dbReference type="EMBL" id="CP001291">
    <property type="protein sequence ID" value="ACK72551.1"/>
    <property type="molecule type" value="Genomic_DNA"/>
</dbReference>
<dbReference type="RefSeq" id="WP_015956136.1">
    <property type="nucleotide sequence ID" value="NC_011729.1"/>
</dbReference>
<dbReference type="SMR" id="B7KLH9"/>
<dbReference type="STRING" id="65393.PCC7424_4181"/>
<dbReference type="KEGG" id="cyc:PCC7424_4181"/>
<dbReference type="eggNOG" id="COG0576">
    <property type="taxonomic scope" value="Bacteria"/>
</dbReference>
<dbReference type="HOGENOM" id="CLU_057217_5_1_3"/>
<dbReference type="OrthoDB" id="9812586at2"/>
<dbReference type="Proteomes" id="UP000002384">
    <property type="component" value="Chromosome"/>
</dbReference>
<dbReference type="GO" id="GO:0005737">
    <property type="term" value="C:cytoplasm"/>
    <property type="evidence" value="ECO:0007669"/>
    <property type="project" value="UniProtKB-SubCell"/>
</dbReference>
<dbReference type="GO" id="GO:0000774">
    <property type="term" value="F:adenyl-nucleotide exchange factor activity"/>
    <property type="evidence" value="ECO:0007669"/>
    <property type="project" value="InterPro"/>
</dbReference>
<dbReference type="GO" id="GO:0042803">
    <property type="term" value="F:protein homodimerization activity"/>
    <property type="evidence" value="ECO:0007669"/>
    <property type="project" value="InterPro"/>
</dbReference>
<dbReference type="GO" id="GO:0051087">
    <property type="term" value="F:protein-folding chaperone binding"/>
    <property type="evidence" value="ECO:0007669"/>
    <property type="project" value="InterPro"/>
</dbReference>
<dbReference type="GO" id="GO:0051082">
    <property type="term" value="F:unfolded protein binding"/>
    <property type="evidence" value="ECO:0007669"/>
    <property type="project" value="TreeGrafter"/>
</dbReference>
<dbReference type="GO" id="GO:0006457">
    <property type="term" value="P:protein folding"/>
    <property type="evidence" value="ECO:0007669"/>
    <property type="project" value="InterPro"/>
</dbReference>
<dbReference type="CDD" id="cd00446">
    <property type="entry name" value="GrpE"/>
    <property type="match status" value="1"/>
</dbReference>
<dbReference type="FunFam" id="2.30.22.10:FF:000001">
    <property type="entry name" value="Protein GrpE"/>
    <property type="match status" value="1"/>
</dbReference>
<dbReference type="Gene3D" id="3.90.20.20">
    <property type="match status" value="1"/>
</dbReference>
<dbReference type="Gene3D" id="2.30.22.10">
    <property type="entry name" value="Head domain of nucleotide exchange factor GrpE"/>
    <property type="match status" value="1"/>
</dbReference>
<dbReference type="HAMAP" id="MF_01151">
    <property type="entry name" value="GrpE"/>
    <property type="match status" value="1"/>
</dbReference>
<dbReference type="InterPro" id="IPR000740">
    <property type="entry name" value="GrpE"/>
</dbReference>
<dbReference type="InterPro" id="IPR013805">
    <property type="entry name" value="GrpE_coiled_coil"/>
</dbReference>
<dbReference type="InterPro" id="IPR009012">
    <property type="entry name" value="GrpE_head"/>
</dbReference>
<dbReference type="NCBIfam" id="NF010741">
    <property type="entry name" value="PRK14143.1"/>
    <property type="match status" value="1"/>
</dbReference>
<dbReference type="PANTHER" id="PTHR21237">
    <property type="entry name" value="GRPE PROTEIN"/>
    <property type="match status" value="1"/>
</dbReference>
<dbReference type="PANTHER" id="PTHR21237:SF23">
    <property type="entry name" value="GRPE PROTEIN HOMOLOG, MITOCHONDRIAL"/>
    <property type="match status" value="1"/>
</dbReference>
<dbReference type="Pfam" id="PF01025">
    <property type="entry name" value="GrpE"/>
    <property type="match status" value="1"/>
</dbReference>
<dbReference type="PRINTS" id="PR00773">
    <property type="entry name" value="GRPEPROTEIN"/>
</dbReference>
<dbReference type="SUPFAM" id="SSF58014">
    <property type="entry name" value="Coiled-coil domain of nucleotide exchange factor GrpE"/>
    <property type="match status" value="1"/>
</dbReference>
<dbReference type="SUPFAM" id="SSF51064">
    <property type="entry name" value="Head domain of nucleotide exchange factor GrpE"/>
    <property type="match status" value="1"/>
</dbReference>
<dbReference type="PROSITE" id="PS01071">
    <property type="entry name" value="GRPE"/>
    <property type="match status" value="1"/>
</dbReference>
<feature type="chain" id="PRO_1000164187" description="Protein GrpE">
    <location>
        <begin position="1"/>
        <end position="286"/>
    </location>
</feature>
<feature type="region of interest" description="Disordered" evidence="2">
    <location>
        <begin position="1"/>
        <end position="51"/>
    </location>
</feature>
<feature type="region of interest" description="Disordered" evidence="2">
    <location>
        <begin position="260"/>
        <end position="286"/>
    </location>
</feature>
<feature type="compositionally biased region" description="Low complexity" evidence="2">
    <location>
        <begin position="39"/>
        <end position="50"/>
    </location>
</feature>
<feature type="compositionally biased region" description="Low complexity" evidence="2">
    <location>
        <begin position="271"/>
        <end position="286"/>
    </location>
</feature>
<organism>
    <name type="scientific">Gloeothece citriformis (strain PCC 7424)</name>
    <name type="common">Cyanothece sp. (strain PCC 7424)</name>
    <dbReference type="NCBI Taxonomy" id="65393"/>
    <lineage>
        <taxon>Bacteria</taxon>
        <taxon>Bacillati</taxon>
        <taxon>Cyanobacteriota</taxon>
        <taxon>Cyanophyceae</taxon>
        <taxon>Oscillatoriophycideae</taxon>
        <taxon>Chroococcales</taxon>
        <taxon>Aphanothecaceae</taxon>
        <taxon>Gloeothece</taxon>
        <taxon>Gloeothece citriformis</taxon>
    </lineage>
</organism>
<reference key="1">
    <citation type="journal article" date="2011" name="MBio">
        <title>Novel metabolic attributes of the genus Cyanothece, comprising a group of unicellular nitrogen-fixing Cyanobacteria.</title>
        <authorList>
            <person name="Bandyopadhyay A."/>
            <person name="Elvitigala T."/>
            <person name="Welsh E."/>
            <person name="Stockel J."/>
            <person name="Liberton M."/>
            <person name="Min H."/>
            <person name="Sherman L.A."/>
            <person name="Pakrasi H.B."/>
        </authorList>
    </citation>
    <scope>NUCLEOTIDE SEQUENCE [LARGE SCALE GENOMIC DNA]</scope>
    <source>
        <strain>PCC 7424</strain>
    </source>
</reference>
<sequence>MSEDNRPLEEQLGNRAESPNTPESVREDNSKSQNNHLNQPSSTPQTPETTADNTFVESELLQDSQGIEKLLATLAEQIGSTQEGQEILGQLQPLLTNLIQQNESLLQTNQSLKDQLEEQNQQIDAAKRRYIGLAAEFDNFRKRTLREKEELEKQAKRKTLSELLTVVDNFERARLQIKPSNEGEGEIHKSYQGVYKNLVDSLKRLGVSAMRAEGEPFDPMYHEAMLREPTNDFPEGTVIEQLVRGYLLDDQVLRHAMVKVAAPKEPDSSETESTSESVSDVQQPTT</sequence>
<gene>
    <name evidence="1" type="primary">grpE</name>
    <name type="ordered locus">PCC7424_4181</name>
</gene>
<protein>
    <recommendedName>
        <fullName evidence="1">Protein GrpE</fullName>
    </recommendedName>
    <alternativeName>
        <fullName evidence="1">HSP-70 cofactor</fullName>
    </alternativeName>
</protein>
<accession>B7KLH9</accession>
<proteinExistence type="inferred from homology"/>
<comment type="function">
    <text evidence="1">Participates actively in the response to hyperosmotic and heat shock by preventing the aggregation of stress-denatured proteins, in association with DnaK and GrpE. It is the nucleotide exchange factor for DnaK and may function as a thermosensor. Unfolded proteins bind initially to DnaJ; upon interaction with the DnaJ-bound protein, DnaK hydrolyzes its bound ATP, resulting in the formation of a stable complex. GrpE releases ADP from DnaK; ATP binding to DnaK triggers the release of the substrate protein, thus completing the reaction cycle. Several rounds of ATP-dependent interactions between DnaJ, DnaK and GrpE are required for fully efficient folding.</text>
</comment>
<comment type="subunit">
    <text evidence="1">Homodimer.</text>
</comment>
<comment type="subcellular location">
    <subcellularLocation>
        <location evidence="1">Cytoplasm</location>
    </subcellularLocation>
</comment>
<comment type="similarity">
    <text evidence="1">Belongs to the GrpE family.</text>
</comment>
<evidence type="ECO:0000255" key="1">
    <source>
        <dbReference type="HAMAP-Rule" id="MF_01151"/>
    </source>
</evidence>
<evidence type="ECO:0000256" key="2">
    <source>
        <dbReference type="SAM" id="MobiDB-lite"/>
    </source>
</evidence>